<feature type="chain" id="PRO_0000385136" description="Major DNA-binding protein">
    <location>
        <begin position="1"/>
        <end position="1199"/>
    </location>
</feature>
<feature type="zinc finger region" evidence="1">
    <location>
        <begin position="497"/>
        <end position="510"/>
    </location>
</feature>
<feature type="region of interest" description="Disordered" evidence="2">
    <location>
        <begin position="289"/>
        <end position="314"/>
    </location>
</feature>
<feature type="region of interest" description="Required for nuclear localization" evidence="1">
    <location>
        <begin position="1172"/>
        <end position="1199"/>
    </location>
</feature>
<feature type="short sequence motif" description="Required for filament formation" evidence="1">
    <location>
        <begin position="841"/>
        <end position="842"/>
    </location>
</feature>
<feature type="short sequence motif" description="Required for filament formation" evidence="1">
    <location>
        <begin position="1146"/>
        <end position="1148"/>
    </location>
</feature>
<evidence type="ECO:0000255" key="1">
    <source>
        <dbReference type="HAMAP-Rule" id="MF_04007"/>
    </source>
</evidence>
<evidence type="ECO:0000256" key="2">
    <source>
        <dbReference type="SAM" id="MobiDB-lite"/>
    </source>
</evidence>
<comment type="function">
    <text evidence="1">Plays several crucial roles in viral infection. Participates in the opening of the viral DNA origin to initiate replication by interacting with the origin-binding protein. May disrupt loops, hairpins and other secondary structures present on ssDNA to reduce and eliminate pausing of viral DNA polymerase at specific sites during elongation. Promotes viral DNA recombination by performing strand-transfer, characterized by the ability to transfer a DNA strand from a linear duplex to a complementary single-stranded DNA circle. Can also catalyze the renaturation of complementary single strands. Additionally, reorganizes the host cell nucleus, leading to the formation of prereplicative sites and replication compartments. This process is driven by the protein which can form double-helical filaments in the absence of DNA.</text>
</comment>
<comment type="subunit">
    <text evidence="1">Homooligomers. Forms double-helical filaments necessary for the formation of replication compartments within the host nucleus. Interacts with the origin-binding protein. Interacts with the helicase primase complex; this interaction stimulates primer synthesis activity of the helicase-primase complex. Interacts with the DNA polymerase. Interacts with the alkaline exonuclease; this interaction increases its nuclease processivity.</text>
</comment>
<comment type="subcellular location">
    <subcellularLocation>
        <location evidence="1">Host nucleus</location>
    </subcellularLocation>
    <text evidence="1">In the absence of DNA replication, found in the nuclear framework-associated structures (prereplicative sites). As viral DNA replication proceeds, it migrates to globular intranuclear structures (replication compartments).</text>
</comment>
<comment type="similarity">
    <text evidence="1">Belongs to the herpesviridae major DNA-binding protein family.</text>
</comment>
<gene>
    <name evidence="1" type="primary">DBP</name>
    <name type="ORF">ORF29</name>
</gene>
<keyword id="KW-0235">DNA replication</keyword>
<keyword id="KW-0238">DNA-binding</keyword>
<keyword id="KW-1048">Host nucleus</keyword>
<keyword id="KW-0479">Metal-binding</keyword>
<keyword id="KW-0862">Zinc</keyword>
<keyword id="KW-0863">Zinc-finger</keyword>
<accession>Q4JQU6</accession>
<organism>
    <name type="scientific">Varicella-zoster virus (strain Oka vaccine)</name>
    <name type="common">HHV-3</name>
    <name type="synonym">Human herpesvirus 3</name>
    <dbReference type="NCBI Taxonomy" id="341980"/>
    <lineage>
        <taxon>Viruses</taxon>
        <taxon>Duplodnaviria</taxon>
        <taxon>Heunggongvirae</taxon>
        <taxon>Peploviricota</taxon>
        <taxon>Herviviricetes</taxon>
        <taxon>Herpesvirales</taxon>
        <taxon>Orthoherpesviridae</taxon>
        <taxon>Alphaherpesvirinae</taxon>
        <taxon>Varicellovirus</taxon>
        <taxon>Varicellovirus humanalpha3</taxon>
        <taxon>Human herpesvirus 3</taxon>
    </lineage>
</organism>
<reference key="1">
    <citation type="journal article" date="2002" name="J. Virol.">
        <title>Comparison of the complete DNA sequences of the Oka varicella vaccine and its parental virus.</title>
        <authorList>
            <person name="Gomi Y."/>
            <person name="Sunamachi H."/>
            <person name="Mori Y."/>
            <person name="Nagaike K."/>
            <person name="Takahashi M."/>
            <person name="Yamanishi K."/>
        </authorList>
    </citation>
    <scope>NUCLEOTIDE SEQUENCE [LARGE SCALE GENOMIC DNA]</scope>
    <source>
        <strain>Isolate Human/Japan/P-Oka/1970</strain>
        <strain>Oka varicella vaccine Biken (V-Oka-Biken)</strain>
    </source>
</reference>
<reference key="2">
    <citation type="journal article" date="2008" name="J. Virol.">
        <title>Complete DNA sequences of two oka strain varicella-zoster virus genomes.</title>
        <authorList>
            <person name="Tillieux S.L."/>
            <person name="Halsey W.S."/>
            <person name="Thomas E.S."/>
            <person name="Voycik J.J."/>
            <person name="Sathe G.M."/>
            <person name="Vassilev V."/>
        </authorList>
    </citation>
    <scope>NUCLEOTIDE SEQUENCE [LARGE SCALE GENOMIC DNA]</scope>
    <source>
        <strain>Oka varicella vaccine VarilRix (V-Oka-GSK)</strain>
        <strain>Oka varicella vaccine Varivax (V-Oka-Merck)</strain>
    </source>
</reference>
<organismHost>
    <name type="scientific">Homo sapiens</name>
    <name type="common">Human</name>
    <dbReference type="NCBI Taxonomy" id="9606"/>
</organismHost>
<dbReference type="EMBL" id="AB097932">
    <property type="status" value="NOT_ANNOTATED_CDS"/>
    <property type="molecule type" value="Genomic_DNA"/>
</dbReference>
<dbReference type="EMBL" id="AB097933">
    <property type="status" value="NOT_ANNOTATED_CDS"/>
    <property type="molecule type" value="Genomic_DNA"/>
</dbReference>
<dbReference type="EMBL" id="DQ008354">
    <property type="protein sequence ID" value="AAY57643.1"/>
    <property type="molecule type" value="Genomic_DNA"/>
</dbReference>
<dbReference type="EMBL" id="DQ008355">
    <property type="protein sequence ID" value="AAY57714.1"/>
    <property type="molecule type" value="Genomic_DNA"/>
</dbReference>
<dbReference type="SMR" id="Q4JQU6"/>
<dbReference type="IntAct" id="Q4JQU6">
    <property type="interactions" value="8"/>
</dbReference>
<dbReference type="Proteomes" id="UP000002603">
    <property type="component" value="Genome"/>
</dbReference>
<dbReference type="Proteomes" id="UP000008504">
    <property type="component" value="Genome"/>
</dbReference>
<dbReference type="Proteomes" id="UP000008505">
    <property type="component" value="Genome"/>
</dbReference>
<dbReference type="Proteomes" id="UP000008506">
    <property type="component" value="Genome"/>
</dbReference>
<dbReference type="GO" id="GO:0039715">
    <property type="term" value="C:nuclear viral factory"/>
    <property type="evidence" value="ECO:0000314"/>
    <property type="project" value="UniProtKB"/>
</dbReference>
<dbReference type="GO" id="GO:0003697">
    <property type="term" value="F:single-stranded DNA binding"/>
    <property type="evidence" value="ECO:0007669"/>
    <property type="project" value="InterPro"/>
</dbReference>
<dbReference type="GO" id="GO:0008270">
    <property type="term" value="F:zinc ion binding"/>
    <property type="evidence" value="ECO:0007669"/>
    <property type="project" value="UniProtKB-KW"/>
</dbReference>
<dbReference type="GO" id="GO:0006260">
    <property type="term" value="P:DNA replication"/>
    <property type="evidence" value="ECO:0007669"/>
    <property type="project" value="UniProtKB-KW"/>
</dbReference>
<dbReference type="FunFam" id="1.20.190.40:FF:000001">
    <property type="entry name" value="Major DNA-binding protein"/>
    <property type="match status" value="1"/>
</dbReference>
<dbReference type="FunFam" id="1.20.190.40:FF:000002">
    <property type="entry name" value="Major DNA-binding protein"/>
    <property type="match status" value="1"/>
</dbReference>
<dbReference type="Gene3D" id="1.10.150.560">
    <property type="match status" value="1"/>
</dbReference>
<dbReference type="Gene3D" id="1.20.190.40">
    <property type="entry name" value="Viral ssDNA binding protein, head domain"/>
    <property type="match status" value="2"/>
</dbReference>
<dbReference type="HAMAP" id="MF_04007">
    <property type="entry name" value="HSV_DNBI"/>
    <property type="match status" value="1"/>
</dbReference>
<dbReference type="InterPro" id="IPR035989">
    <property type="entry name" value="DBP_sf"/>
</dbReference>
<dbReference type="InterPro" id="IPR043031">
    <property type="entry name" value="Viral_ssDBP_head"/>
</dbReference>
<dbReference type="InterPro" id="IPR000635">
    <property type="entry name" value="Viral_ssDNA-bd"/>
</dbReference>
<dbReference type="Pfam" id="PF00747">
    <property type="entry name" value="Viral_DNA_bp"/>
    <property type="match status" value="1"/>
</dbReference>
<dbReference type="SUPFAM" id="SSF118208">
    <property type="entry name" value="Viral ssDNA binding protein"/>
    <property type="match status" value="1"/>
</dbReference>
<name>DNBI_VZVO</name>
<protein>
    <recommendedName>
        <fullName evidence="1">Major DNA-binding protein</fullName>
    </recommendedName>
</protein>
<sequence>MENTQKTVTVPTGPLGYVYACRVEDLDLEEISFLAARSTDSDLALLPLMRNLTVEKTFTSSLAVVSGARTTGLAGAGITLKLTTSHFYPSVFVFHGGKHVLPSSAAPNLTRACNAARERFGFSRCQGPPVDGAVETTGAEICTRLGLEPENTILYLVVTALFKEAVFMCNVFLHYGGLDIVHINHGDVIRIPLFPVQLFMPDVNRLVPDPFNTHHRSIGEGFVYPTPFYNTGLCHLIHDCVIAPMAVALRVRNVTAVARGAAHLAFDENHEGAVLPPDITYTYFQSSSSGTTTARGARRNDVNSTSKPSPSGGFERRLASIMAADTALHAEVIFNTGIYEETPTDIKEWPMFIGMEGTLPRLNALGSYTARVAGVIGAMVFSPNSALYLTEVEDSGMTEAKDGGPGPSFNRFYQFAGPHLAANPQTDRDGHVLSSQSTGSSNTEFSVDYLALICGFGAPLLARLLFYLERCDAGAFTGGHGDALKYVTGTFDSEIPCSLCEKHTRPVCAHTTVHRLRQRMPRFGQATRQPIGVFGTMNSQYSDCDPLGNYAPYLILRKPGDQTEAAKATMQDTYRATLERLFIDLEQERLLDRGAPCSSEGLSSVIVDHPTFRRILDTLRARIEQTTTQFMKVLVETRDYKIREGLSEATHSMALTFDPYSGAFCPITNFLVKRTHLAVVQDLALSQCHCVFYGQQVEGRNFRNQFQPVLRRRFVDLFNGGFISTRSITVTLSEGPVSAPNPTLGQDAPAGRTFDGDLARVSVEVIRDIRVKNRVVFSGNCTNLSEAARARLVGLASAYQRQEKRVDMLHGALGFLLKQFHGLLFPRGMPPNSKSPNPQWFWTLLQRNQMPADKLTHEEITTIAAVKRFTEEYAALNFINLPPTCIGELAQFYMANLILKYCDHSQYLINTLTSIITGARRPRDPSSVLHWIRKDVTSAADIETQAKALLEKTENLPELWTTAFTSTHLVRAAMNQRPMVVLGISISKYHGAAGNNRVFQAGNWSGLNGGKNVCPLFTFDRTRRFIITCPRGGFICPVTGPSSGNRETTLSDQVRGIIVSGGAMVQLAIYATVVRAVGARAQHMAFDDWLSLTDDEFLARDLEELHDQIIQTLETPWTVEGALEAVKILDEKTTAGDGETPTNLAFNFDSCEPSHDTTSNVLNISGSTVPGLKRPPEDDELFDLSGIPIKHGNITMEMI</sequence>
<proteinExistence type="inferred from homology"/>